<keyword id="KW-0378">Hydrolase</keyword>
<keyword id="KW-0460">Magnesium</keyword>
<keyword id="KW-0479">Metal-binding</keyword>
<keyword id="KW-1185">Reference proteome</keyword>
<organism>
    <name type="scientific">Streptococcus agalactiae serotype V (strain ATCC BAA-611 / 2603 V/R)</name>
    <dbReference type="NCBI Taxonomy" id="208435"/>
    <lineage>
        <taxon>Bacteria</taxon>
        <taxon>Bacillati</taxon>
        <taxon>Bacillota</taxon>
        <taxon>Bacilli</taxon>
        <taxon>Lactobacillales</taxon>
        <taxon>Streptococcaceae</taxon>
        <taxon>Streptococcus</taxon>
    </lineage>
</organism>
<evidence type="ECO:0000255" key="1">
    <source>
        <dbReference type="HAMAP-Rule" id="MF_01568"/>
    </source>
</evidence>
<proteinExistence type="inferred from homology"/>
<accession>Q8E1E5</accession>
<protein>
    <recommendedName>
        <fullName evidence="1">Nucleoside triphosphate/diphosphate phosphatase</fullName>
        <ecNumber evidence="1">3.6.1.15</ecNumber>
        <ecNumber evidence="1">3.6.1.6</ecNumber>
    </recommendedName>
</protein>
<comment type="function">
    <text evidence="1">Has nucleoside phosphatase activity towards nucleoside triphosphates and nucleoside diphosphates.</text>
</comment>
<comment type="catalytic activity">
    <reaction evidence="1">
        <text>a ribonucleoside 5'-triphosphate + H2O = a ribonucleoside 5'-diphosphate + phosphate + H(+)</text>
        <dbReference type="Rhea" id="RHEA:23680"/>
        <dbReference type="ChEBI" id="CHEBI:15377"/>
        <dbReference type="ChEBI" id="CHEBI:15378"/>
        <dbReference type="ChEBI" id="CHEBI:43474"/>
        <dbReference type="ChEBI" id="CHEBI:57930"/>
        <dbReference type="ChEBI" id="CHEBI:61557"/>
        <dbReference type="EC" id="3.6.1.15"/>
    </reaction>
</comment>
<comment type="catalytic activity">
    <reaction evidence="1">
        <text>a ribonucleoside 5'-diphosphate + H2O = a ribonucleoside 5'-phosphate + phosphate + H(+)</text>
        <dbReference type="Rhea" id="RHEA:36799"/>
        <dbReference type="ChEBI" id="CHEBI:15377"/>
        <dbReference type="ChEBI" id="CHEBI:15378"/>
        <dbReference type="ChEBI" id="CHEBI:43474"/>
        <dbReference type="ChEBI" id="CHEBI:57930"/>
        <dbReference type="ChEBI" id="CHEBI:58043"/>
        <dbReference type="EC" id="3.6.1.6"/>
    </reaction>
</comment>
<comment type="cofactor">
    <cofactor evidence="1">
        <name>Mg(2+)</name>
        <dbReference type="ChEBI" id="CHEBI:18420"/>
    </cofactor>
</comment>
<comment type="similarity">
    <text evidence="1">Belongs to the Ntdp family.</text>
</comment>
<gene>
    <name type="ordered locus">SAG0411</name>
</gene>
<sequence length="177" mass="21168">MRLPKEGDFITIQSYKHDGSLHRTWRDTMVLKTTENALIGVNDHTLVTENDGRRWVTREPAIVYFHKKYWFNIIAMIRETGVSYYCNLASPYILDPEALKYIDYDLDVKVFADGEKRLLDVDEYEQHKAQMNYPTDIDYILKENVKILVEWINENKGPFSSSYINIWYKRYLELKKR</sequence>
<name>NTDP_STRA5</name>
<reference key="1">
    <citation type="journal article" date="2002" name="Proc. Natl. Acad. Sci. U.S.A.">
        <title>Complete genome sequence and comparative genomic analysis of an emerging human pathogen, serotype V Streptococcus agalactiae.</title>
        <authorList>
            <person name="Tettelin H."/>
            <person name="Masignani V."/>
            <person name="Cieslewicz M.J."/>
            <person name="Eisen J.A."/>
            <person name="Peterson S.N."/>
            <person name="Wessels M.R."/>
            <person name="Paulsen I.T."/>
            <person name="Nelson K.E."/>
            <person name="Margarit I."/>
            <person name="Read T.D."/>
            <person name="Madoff L.C."/>
            <person name="Wolf A.M."/>
            <person name="Beanan M.J."/>
            <person name="Brinkac L.M."/>
            <person name="Daugherty S.C."/>
            <person name="DeBoy R.T."/>
            <person name="Durkin A.S."/>
            <person name="Kolonay J.F."/>
            <person name="Madupu R."/>
            <person name="Lewis M.R."/>
            <person name="Radune D."/>
            <person name="Fedorova N.B."/>
            <person name="Scanlan D."/>
            <person name="Khouri H.M."/>
            <person name="Mulligan S."/>
            <person name="Carty H.A."/>
            <person name="Cline R.T."/>
            <person name="Van Aken S.E."/>
            <person name="Gill J."/>
            <person name="Scarselli M."/>
            <person name="Mora M."/>
            <person name="Iacobini E.T."/>
            <person name="Brettoni C."/>
            <person name="Galli G."/>
            <person name="Mariani M."/>
            <person name="Vegni F."/>
            <person name="Maione D."/>
            <person name="Rinaudo D."/>
            <person name="Rappuoli R."/>
            <person name="Telford J.L."/>
            <person name="Kasper D.L."/>
            <person name="Grandi G."/>
            <person name="Fraser C.M."/>
        </authorList>
    </citation>
    <scope>NUCLEOTIDE SEQUENCE [LARGE SCALE GENOMIC DNA]</scope>
    <source>
        <strain>ATCC BAA-611 / 2603 V/R</strain>
    </source>
</reference>
<feature type="chain" id="PRO_0000248119" description="Nucleoside triphosphate/diphosphate phosphatase">
    <location>
        <begin position="1"/>
        <end position="177"/>
    </location>
</feature>
<feature type="active site" description="Proton donor" evidence="1">
    <location>
        <position position="23"/>
    </location>
</feature>
<feature type="binding site" evidence="1">
    <location>
        <position position="87"/>
    </location>
    <ligand>
        <name>Mg(2+)</name>
        <dbReference type="ChEBI" id="CHEBI:18420"/>
        <label>1</label>
    </ligand>
</feature>
<feature type="binding site" evidence="1">
    <location>
        <position position="103"/>
    </location>
    <ligand>
        <name>Mg(2+)</name>
        <dbReference type="ChEBI" id="CHEBI:18420"/>
        <label>1</label>
    </ligand>
</feature>
<feature type="binding site" evidence="1">
    <location>
        <position position="105"/>
    </location>
    <ligand>
        <name>Mg(2+)</name>
        <dbReference type="ChEBI" id="CHEBI:18420"/>
        <label>2</label>
    </ligand>
</feature>
<feature type="binding site" evidence="1">
    <location>
        <position position="107"/>
    </location>
    <ligand>
        <name>Mg(2+)</name>
        <dbReference type="ChEBI" id="CHEBI:18420"/>
        <label>1</label>
    </ligand>
</feature>
<feature type="binding site" evidence="1">
    <location>
        <position position="107"/>
    </location>
    <ligand>
        <name>Mg(2+)</name>
        <dbReference type="ChEBI" id="CHEBI:18420"/>
        <label>2</label>
    </ligand>
</feature>
<feature type="binding site" evidence="1">
    <location>
        <position position="120"/>
    </location>
    <ligand>
        <name>Mg(2+)</name>
        <dbReference type="ChEBI" id="CHEBI:18420"/>
        <label>2</label>
    </ligand>
</feature>
<feature type="binding site" evidence="1">
    <location>
        <position position="123"/>
    </location>
    <ligand>
        <name>Mg(2+)</name>
        <dbReference type="ChEBI" id="CHEBI:18420"/>
        <label>2</label>
    </ligand>
</feature>
<dbReference type="EC" id="3.6.1.15" evidence="1"/>
<dbReference type="EC" id="3.6.1.6" evidence="1"/>
<dbReference type="EMBL" id="AE009948">
    <property type="protein sequence ID" value="AAM99317.1"/>
    <property type="molecule type" value="Genomic_DNA"/>
</dbReference>
<dbReference type="RefSeq" id="NP_687445.1">
    <property type="nucleotide sequence ID" value="NC_004116.1"/>
</dbReference>
<dbReference type="RefSeq" id="WP_001239184.1">
    <property type="nucleotide sequence ID" value="NC_004116.1"/>
</dbReference>
<dbReference type="SMR" id="Q8E1E5"/>
<dbReference type="STRING" id="208435.SAG0411"/>
<dbReference type="KEGG" id="sag:SAG0411"/>
<dbReference type="PATRIC" id="fig|208435.3.peg.406"/>
<dbReference type="HOGENOM" id="CLU_109787_1_0_9"/>
<dbReference type="OrthoDB" id="1645325at2"/>
<dbReference type="Proteomes" id="UP000000821">
    <property type="component" value="Chromosome"/>
</dbReference>
<dbReference type="GO" id="GO:0000287">
    <property type="term" value="F:magnesium ion binding"/>
    <property type="evidence" value="ECO:0007669"/>
    <property type="project" value="UniProtKB-UniRule"/>
</dbReference>
<dbReference type="GO" id="GO:0017110">
    <property type="term" value="F:nucleoside diphosphate phosphatase activity"/>
    <property type="evidence" value="ECO:0007669"/>
    <property type="project" value="UniProtKB-UniRule"/>
</dbReference>
<dbReference type="GO" id="GO:0017111">
    <property type="term" value="F:ribonucleoside triphosphate phosphatase activity"/>
    <property type="evidence" value="ECO:0007669"/>
    <property type="project" value="UniProtKB-UniRule"/>
</dbReference>
<dbReference type="Gene3D" id="2.40.380.10">
    <property type="entry name" value="FomD-like"/>
    <property type="match status" value="1"/>
</dbReference>
<dbReference type="HAMAP" id="MF_01568">
    <property type="entry name" value="Ntdp"/>
    <property type="match status" value="1"/>
</dbReference>
<dbReference type="InterPro" id="IPR007295">
    <property type="entry name" value="DUF402"/>
</dbReference>
<dbReference type="InterPro" id="IPR035930">
    <property type="entry name" value="FomD-like_sf"/>
</dbReference>
<dbReference type="InterPro" id="IPR050212">
    <property type="entry name" value="Ntdp-like"/>
</dbReference>
<dbReference type="InterPro" id="IPR016882">
    <property type="entry name" value="SA1684"/>
</dbReference>
<dbReference type="NCBIfam" id="NF010183">
    <property type="entry name" value="PRK13662.1"/>
    <property type="match status" value="1"/>
</dbReference>
<dbReference type="PANTHER" id="PTHR39159">
    <property type="match status" value="1"/>
</dbReference>
<dbReference type="PANTHER" id="PTHR39159:SF1">
    <property type="entry name" value="UPF0374 PROTEIN YGAC"/>
    <property type="match status" value="1"/>
</dbReference>
<dbReference type="Pfam" id="PF04167">
    <property type="entry name" value="DUF402"/>
    <property type="match status" value="1"/>
</dbReference>
<dbReference type="PIRSF" id="PIRSF028345">
    <property type="entry name" value="UCP028345"/>
    <property type="match status" value="1"/>
</dbReference>
<dbReference type="SUPFAM" id="SSF159234">
    <property type="entry name" value="FomD-like"/>
    <property type="match status" value="1"/>
</dbReference>